<organism>
    <name type="scientific">Dictyostelium discoideum</name>
    <name type="common">Social amoeba</name>
    <dbReference type="NCBI Taxonomy" id="44689"/>
    <lineage>
        <taxon>Eukaryota</taxon>
        <taxon>Amoebozoa</taxon>
        <taxon>Evosea</taxon>
        <taxon>Eumycetozoa</taxon>
        <taxon>Dictyostelia</taxon>
        <taxon>Dictyosteliales</taxon>
        <taxon>Dictyosteliaceae</taxon>
        <taxon>Dictyostelium</taxon>
    </lineage>
</organism>
<name>Y8031_DICDI</name>
<protein>
    <recommendedName>
        <fullName>CRAL-TRIO domain-containing protein DDB_G0278031</fullName>
    </recommendedName>
</protein>
<gene>
    <name type="ORF">DDB_G0278031</name>
</gene>
<dbReference type="EMBL" id="AAFI02000023">
    <property type="protein sequence ID" value="EAL68188.2"/>
    <property type="molecule type" value="Genomic_DNA"/>
</dbReference>
<dbReference type="RefSeq" id="XP_642079.2">
    <property type="nucleotide sequence ID" value="XM_636987.2"/>
</dbReference>
<dbReference type="SMR" id="Q54YX3"/>
<dbReference type="FunCoup" id="Q54YX3">
    <property type="interactions" value="3"/>
</dbReference>
<dbReference type="STRING" id="44689.Q54YX3"/>
<dbReference type="PaxDb" id="44689-DDB0304443"/>
<dbReference type="EnsemblProtists" id="EAL68188">
    <property type="protein sequence ID" value="EAL68188"/>
    <property type="gene ID" value="DDB_G0278031"/>
</dbReference>
<dbReference type="GeneID" id="8621292"/>
<dbReference type="KEGG" id="ddi:DDB_G0278031"/>
<dbReference type="dictyBase" id="DDB_G0278031"/>
<dbReference type="VEuPathDB" id="AmoebaDB:DDB_G0278031"/>
<dbReference type="eggNOG" id="KOG1471">
    <property type="taxonomic scope" value="Eukaryota"/>
</dbReference>
<dbReference type="HOGENOM" id="CLU_1087500_0_0_1"/>
<dbReference type="InParanoid" id="Q54YX3"/>
<dbReference type="OMA" id="HESAVCH"/>
<dbReference type="PhylomeDB" id="Q54YX3"/>
<dbReference type="Reactome" id="R-DDI-2187335">
    <property type="pathway name" value="The retinoid cycle in cones (daylight vision)"/>
</dbReference>
<dbReference type="Reactome" id="R-DDI-2453902">
    <property type="pathway name" value="The canonical retinoid cycle in rods (twilight vision)"/>
</dbReference>
<dbReference type="Reactome" id="R-DDI-432720">
    <property type="pathway name" value="Lysosome Vesicle Biogenesis"/>
</dbReference>
<dbReference type="Reactome" id="R-DDI-8877627">
    <property type="pathway name" value="Vitamin E transport"/>
</dbReference>
<dbReference type="PRO" id="PR:Q54YX3"/>
<dbReference type="Proteomes" id="UP000002195">
    <property type="component" value="Chromosome 3"/>
</dbReference>
<dbReference type="GO" id="GO:1902936">
    <property type="term" value="F:phosphatidylinositol bisphosphate binding"/>
    <property type="evidence" value="ECO:0000318"/>
    <property type="project" value="GO_Central"/>
</dbReference>
<dbReference type="CDD" id="cd00170">
    <property type="entry name" value="SEC14"/>
    <property type="match status" value="1"/>
</dbReference>
<dbReference type="Gene3D" id="3.40.525.10">
    <property type="entry name" value="CRAL-TRIO lipid binding domain"/>
    <property type="match status" value="1"/>
</dbReference>
<dbReference type="InterPro" id="IPR001251">
    <property type="entry name" value="CRAL-TRIO_dom"/>
</dbReference>
<dbReference type="InterPro" id="IPR036865">
    <property type="entry name" value="CRAL-TRIO_dom_sf"/>
</dbReference>
<dbReference type="InterPro" id="IPR036273">
    <property type="entry name" value="CRAL/TRIO_N_dom_sf"/>
</dbReference>
<dbReference type="PANTHER" id="PTHR10174">
    <property type="entry name" value="ALPHA-TOCOPHEROL TRANSFER PROTEIN-RELATED"/>
    <property type="match status" value="1"/>
</dbReference>
<dbReference type="PANTHER" id="PTHR10174:SF208">
    <property type="entry name" value="CRAL-TRIO DOMAIN-CONTAINING PROTEIN DDB_G0278031"/>
    <property type="match status" value="1"/>
</dbReference>
<dbReference type="Pfam" id="PF00650">
    <property type="entry name" value="CRAL_TRIO"/>
    <property type="match status" value="1"/>
</dbReference>
<dbReference type="SMART" id="SM00516">
    <property type="entry name" value="SEC14"/>
    <property type="match status" value="1"/>
</dbReference>
<dbReference type="SUPFAM" id="SSF52087">
    <property type="entry name" value="CRAL/TRIO domain"/>
    <property type="match status" value="1"/>
</dbReference>
<dbReference type="SUPFAM" id="SSF46938">
    <property type="entry name" value="CRAL/TRIO N-terminal domain"/>
    <property type="match status" value="1"/>
</dbReference>
<dbReference type="PROSITE" id="PS50191">
    <property type="entry name" value="CRAL_TRIO"/>
    <property type="match status" value="1"/>
</dbReference>
<reference key="1">
    <citation type="journal article" date="2005" name="Nature">
        <title>The genome of the social amoeba Dictyostelium discoideum.</title>
        <authorList>
            <person name="Eichinger L."/>
            <person name="Pachebat J.A."/>
            <person name="Gloeckner G."/>
            <person name="Rajandream M.A."/>
            <person name="Sucgang R."/>
            <person name="Berriman M."/>
            <person name="Song J."/>
            <person name="Olsen R."/>
            <person name="Szafranski K."/>
            <person name="Xu Q."/>
            <person name="Tunggal B."/>
            <person name="Kummerfeld S."/>
            <person name="Madera M."/>
            <person name="Konfortov B.A."/>
            <person name="Rivero F."/>
            <person name="Bankier A.T."/>
            <person name="Lehmann R."/>
            <person name="Hamlin N."/>
            <person name="Davies R."/>
            <person name="Gaudet P."/>
            <person name="Fey P."/>
            <person name="Pilcher K."/>
            <person name="Chen G."/>
            <person name="Saunders D."/>
            <person name="Sodergren E.J."/>
            <person name="Davis P."/>
            <person name="Kerhornou A."/>
            <person name="Nie X."/>
            <person name="Hall N."/>
            <person name="Anjard C."/>
            <person name="Hemphill L."/>
            <person name="Bason N."/>
            <person name="Farbrother P."/>
            <person name="Desany B."/>
            <person name="Just E."/>
            <person name="Morio T."/>
            <person name="Rost R."/>
            <person name="Churcher C.M."/>
            <person name="Cooper J."/>
            <person name="Haydock S."/>
            <person name="van Driessche N."/>
            <person name="Cronin A."/>
            <person name="Goodhead I."/>
            <person name="Muzny D.M."/>
            <person name="Mourier T."/>
            <person name="Pain A."/>
            <person name="Lu M."/>
            <person name="Harper D."/>
            <person name="Lindsay R."/>
            <person name="Hauser H."/>
            <person name="James K.D."/>
            <person name="Quiles M."/>
            <person name="Madan Babu M."/>
            <person name="Saito T."/>
            <person name="Buchrieser C."/>
            <person name="Wardroper A."/>
            <person name="Felder M."/>
            <person name="Thangavelu M."/>
            <person name="Johnson D."/>
            <person name="Knights A."/>
            <person name="Loulseged H."/>
            <person name="Mungall K.L."/>
            <person name="Oliver K."/>
            <person name="Price C."/>
            <person name="Quail M.A."/>
            <person name="Urushihara H."/>
            <person name="Hernandez J."/>
            <person name="Rabbinowitsch E."/>
            <person name="Steffen D."/>
            <person name="Sanders M."/>
            <person name="Ma J."/>
            <person name="Kohara Y."/>
            <person name="Sharp S."/>
            <person name="Simmonds M.N."/>
            <person name="Spiegler S."/>
            <person name="Tivey A."/>
            <person name="Sugano S."/>
            <person name="White B."/>
            <person name="Walker D."/>
            <person name="Woodward J.R."/>
            <person name="Winckler T."/>
            <person name="Tanaka Y."/>
            <person name="Shaulsky G."/>
            <person name="Schleicher M."/>
            <person name="Weinstock G.M."/>
            <person name="Rosenthal A."/>
            <person name="Cox E.C."/>
            <person name="Chisholm R.L."/>
            <person name="Gibbs R.A."/>
            <person name="Loomis W.F."/>
            <person name="Platzer M."/>
            <person name="Kay R.R."/>
            <person name="Williams J.G."/>
            <person name="Dear P.H."/>
            <person name="Noegel A.A."/>
            <person name="Barrell B.G."/>
            <person name="Kuspa A."/>
        </authorList>
    </citation>
    <scope>NUCLEOTIDE SEQUENCE [LARGE SCALE GENOMIC DNA]</scope>
    <source>
        <strain>AX4</strain>
    </source>
</reference>
<feature type="chain" id="PRO_0000370855" description="CRAL-TRIO domain-containing protein DDB_G0278031">
    <location>
        <begin position="1"/>
        <end position="256"/>
    </location>
</feature>
<feature type="domain" description="CRAL-TRIO" evidence="1">
    <location>
        <begin position="82"/>
        <end position="245"/>
    </location>
</feature>
<evidence type="ECO:0000255" key="1">
    <source>
        <dbReference type="PROSITE-ProRule" id="PRU00056"/>
    </source>
</evidence>
<accession>Q54YX3</accession>
<sequence>MVSFELNEEEFKILEDLTNDELIALSKFKDFPICKDIKDQYLLLFLFSKKFDLEKAHTLIKNNLLIREKLEISLPVVKNQVNPELAMKSSSFNIIGYRDNNGCSISYLHPSKAKPKDFTLKEYMTFLLWSQDQSAHDHSSVHRNGMTIIEDLHKISIFKHFDSRLQDFLKKNKLNDMQDVFIGRIQKIYILNPPWVLKPLLSLAKTFMKNKLISRIEICKNDQIFTTIDQSKVLFEYGGTLNLTYIDYFNSLPSNF</sequence>
<proteinExistence type="predicted"/>
<keyword id="KW-1185">Reference proteome</keyword>